<gene>
    <name evidence="1" type="primary">TAH18</name>
    <name type="ordered locus">CNF04590</name>
</gene>
<sequence length="617" mass="70183">MIPMILYASETGNAQDTAERVARAFRANGRAVTCLPMDQFPISALPHTYLLILLTSTHGRGDPPPAMLPLWTALLRSSLPEDILEDVHFALFGLGDSSYERFCYAGKMLLRRMEQLGATKMGEPAWGDERSPNGIEDAFLPWLQQTLDLYLPYLPLISPTPKIIESTVLPPPIYKISPASTSKSVEHDLSLERLSISFPIPNGKPAPVRVEDQARDKASTSRTKPDDWVWATLKKNIRLTSKDWWQDVREIELEFDDPDTKPYTAGSICSLQPQSREDDVNMFLEMMELTSQADEVVTIESLLDEQPLPSHLPPAGTPTTLRSLLTNHLDIRYSPRKSFFEWLRRLSTNEMERERLDEFISDPDEIHTYATRPSRTIVETLADFRFTRIPMSHILEILPPLRRRQFSIASSWEDHPGKVQLLVALIEYKTNLKIPRKGLCSSWLNGLPVGTRIPIHIASPTLFLPQDPEVPIILVGPGTGVAPMRAFVEIRVRQGAAKNTSLYFGCRSSTTDYFFESEWDVHREKGVKIQVAASRDQEERIYVQHLIKRDKEYVKEWIVDKKGWLFISGSSNAMPREVREAVAWCISKEGAGDMTEEESKAYVEQMFEDKRGGEESW</sequence>
<evidence type="ECO:0000255" key="1">
    <source>
        <dbReference type="HAMAP-Rule" id="MF_03178"/>
    </source>
</evidence>
<organism>
    <name type="scientific">Cryptococcus neoformans var. neoformans serotype D (strain JEC21 / ATCC MYA-565)</name>
    <name type="common">Filobasidiella neoformans</name>
    <dbReference type="NCBI Taxonomy" id="214684"/>
    <lineage>
        <taxon>Eukaryota</taxon>
        <taxon>Fungi</taxon>
        <taxon>Dikarya</taxon>
        <taxon>Basidiomycota</taxon>
        <taxon>Agaricomycotina</taxon>
        <taxon>Tremellomycetes</taxon>
        <taxon>Tremellales</taxon>
        <taxon>Cryptococcaceae</taxon>
        <taxon>Cryptococcus</taxon>
        <taxon>Cryptococcus neoformans species complex</taxon>
    </lineage>
</organism>
<reference key="1">
    <citation type="journal article" date="2005" name="Science">
        <title>The genome of the basidiomycetous yeast and human pathogen Cryptococcus neoformans.</title>
        <authorList>
            <person name="Loftus B.J."/>
            <person name="Fung E."/>
            <person name="Roncaglia P."/>
            <person name="Rowley D."/>
            <person name="Amedeo P."/>
            <person name="Bruno D."/>
            <person name="Vamathevan J."/>
            <person name="Miranda M."/>
            <person name="Anderson I.J."/>
            <person name="Fraser J.A."/>
            <person name="Allen J.E."/>
            <person name="Bosdet I.E."/>
            <person name="Brent M.R."/>
            <person name="Chiu R."/>
            <person name="Doering T.L."/>
            <person name="Donlin M.J."/>
            <person name="D'Souza C.A."/>
            <person name="Fox D.S."/>
            <person name="Grinberg V."/>
            <person name="Fu J."/>
            <person name="Fukushima M."/>
            <person name="Haas B.J."/>
            <person name="Huang J.C."/>
            <person name="Janbon G."/>
            <person name="Jones S.J.M."/>
            <person name="Koo H.L."/>
            <person name="Krzywinski M.I."/>
            <person name="Kwon-Chung K.J."/>
            <person name="Lengeler K.B."/>
            <person name="Maiti R."/>
            <person name="Marra M.A."/>
            <person name="Marra R.E."/>
            <person name="Mathewson C.A."/>
            <person name="Mitchell T.G."/>
            <person name="Pertea M."/>
            <person name="Riggs F.R."/>
            <person name="Salzberg S.L."/>
            <person name="Schein J.E."/>
            <person name="Shvartsbeyn A."/>
            <person name="Shin H."/>
            <person name="Shumway M."/>
            <person name="Specht C.A."/>
            <person name="Suh B.B."/>
            <person name="Tenney A."/>
            <person name="Utterback T.R."/>
            <person name="Wickes B.L."/>
            <person name="Wortman J.R."/>
            <person name="Wye N.H."/>
            <person name="Kronstad J.W."/>
            <person name="Lodge J.K."/>
            <person name="Heitman J."/>
            <person name="Davis R.W."/>
            <person name="Fraser C.M."/>
            <person name="Hyman R.W."/>
        </authorList>
    </citation>
    <scope>NUCLEOTIDE SEQUENCE [LARGE SCALE GENOMIC DNA]</scope>
    <source>
        <strain>JEC21 / ATCC MYA-565</strain>
    </source>
</reference>
<comment type="function">
    <text evidence="1">NADPH-dependent reductase which is a central component of the cytosolic iron-sulfur (Fe-S) protein assembly (CIA) machinery. Transfers electrons from NADPH via its FAD and FMN prosthetic groups to the [2Fe-2S] cluster of DRE2, another key component of the CIA machinery. In turn, this reduced cluster provides electrons for assembly of cytosolic iron-sulfur cluster proteins. Positively controls H(2)O(2)-induced cell death.</text>
</comment>
<comment type="catalytic activity">
    <reaction evidence="1">
        <text>2 oxidized [2Fe-2S]-[protein] + NADPH = 2 reduced [2Fe-2S]-[protein] + NADP(+) + H(+)</text>
        <dbReference type="Rhea" id="RHEA:67716"/>
        <dbReference type="Rhea" id="RHEA-COMP:17327"/>
        <dbReference type="Rhea" id="RHEA-COMP:17328"/>
        <dbReference type="ChEBI" id="CHEBI:15378"/>
        <dbReference type="ChEBI" id="CHEBI:33737"/>
        <dbReference type="ChEBI" id="CHEBI:33738"/>
        <dbReference type="ChEBI" id="CHEBI:57783"/>
        <dbReference type="ChEBI" id="CHEBI:58349"/>
    </reaction>
    <physiologicalReaction direction="left-to-right" evidence="1">
        <dbReference type="Rhea" id="RHEA:67717"/>
    </physiologicalReaction>
</comment>
<comment type="cofactor">
    <cofactor evidence="1">
        <name>FAD</name>
        <dbReference type="ChEBI" id="CHEBI:57692"/>
    </cofactor>
</comment>
<comment type="cofactor">
    <cofactor evidence="1">
        <name>FMN</name>
        <dbReference type="ChEBI" id="CHEBI:58210"/>
    </cofactor>
</comment>
<comment type="subunit">
    <text evidence="1">Interacts with DRE2; as part of the cytosolic iron-sulfur (Fe-S) protein assembly (CIA) machinery.</text>
</comment>
<comment type="subcellular location">
    <subcellularLocation>
        <location evidence="1">Cytoplasm</location>
    </subcellularLocation>
    <subcellularLocation>
        <location evidence="1">Mitochondrion</location>
    </subcellularLocation>
    <text evidence="1">Relocalizes to mitochondria after H(2)O(2) exposure.</text>
</comment>
<comment type="similarity">
    <text evidence="1">Belongs to the NADPH-dependent diflavin oxidoreductase NDOR1 family.</text>
</comment>
<comment type="similarity">
    <text evidence="1">In the N-terminal section; belongs to the flavodoxin family.</text>
</comment>
<comment type="similarity">
    <text evidence="1">In the C-terminal section; belongs to the flavoprotein pyridine nucleotide cytochrome reductase family.</text>
</comment>
<name>NDOR1_CRYNJ</name>
<dbReference type="EC" id="1.18.1.-" evidence="1"/>
<dbReference type="EMBL" id="AE017346">
    <property type="protein sequence ID" value="AAW44330.1"/>
    <property type="molecule type" value="Genomic_DNA"/>
</dbReference>
<dbReference type="RefSeq" id="XP_571637.1">
    <property type="nucleotide sequence ID" value="XM_571637.1"/>
</dbReference>
<dbReference type="SMR" id="P0CP12"/>
<dbReference type="FunCoup" id="P0CP12">
    <property type="interactions" value="435"/>
</dbReference>
<dbReference type="STRING" id="214684.P0CP12"/>
<dbReference type="PaxDb" id="214684-P0CP12"/>
<dbReference type="EnsemblFungi" id="AAW44330">
    <property type="protein sequence ID" value="AAW44330"/>
    <property type="gene ID" value="CNF04590"/>
</dbReference>
<dbReference type="VEuPathDB" id="FungiDB:CNF04590"/>
<dbReference type="eggNOG" id="KOG1159">
    <property type="taxonomic scope" value="Eukaryota"/>
</dbReference>
<dbReference type="HOGENOM" id="CLU_001570_17_6_1"/>
<dbReference type="InParanoid" id="P0CP12"/>
<dbReference type="OMA" id="DIMSIPR"/>
<dbReference type="OrthoDB" id="1856718at2759"/>
<dbReference type="Proteomes" id="UP000002149">
    <property type="component" value="Chromosome 6"/>
</dbReference>
<dbReference type="GO" id="GO:0005829">
    <property type="term" value="C:cytosol"/>
    <property type="evidence" value="ECO:0000318"/>
    <property type="project" value="GO_Central"/>
</dbReference>
<dbReference type="GO" id="GO:0005739">
    <property type="term" value="C:mitochondrion"/>
    <property type="evidence" value="ECO:0007669"/>
    <property type="project" value="UniProtKB-SubCell"/>
</dbReference>
<dbReference type="GO" id="GO:0050660">
    <property type="term" value="F:flavin adenine dinucleotide binding"/>
    <property type="evidence" value="ECO:0000318"/>
    <property type="project" value="GO_Central"/>
</dbReference>
<dbReference type="GO" id="GO:0010181">
    <property type="term" value="F:FMN binding"/>
    <property type="evidence" value="ECO:0000318"/>
    <property type="project" value="GO_Central"/>
</dbReference>
<dbReference type="GO" id="GO:0050661">
    <property type="term" value="F:NADP binding"/>
    <property type="evidence" value="ECO:0007669"/>
    <property type="project" value="UniProtKB-UniRule"/>
</dbReference>
<dbReference type="GO" id="GO:0003958">
    <property type="term" value="F:NADPH-hemoprotein reductase activity"/>
    <property type="evidence" value="ECO:0007669"/>
    <property type="project" value="InterPro"/>
</dbReference>
<dbReference type="GO" id="GO:0016491">
    <property type="term" value="F:oxidoreductase activity"/>
    <property type="evidence" value="ECO:0000318"/>
    <property type="project" value="GO_Central"/>
</dbReference>
<dbReference type="GO" id="GO:0016226">
    <property type="term" value="P:iron-sulfur cluster assembly"/>
    <property type="evidence" value="ECO:0007669"/>
    <property type="project" value="UniProtKB-UniRule"/>
</dbReference>
<dbReference type="FunFam" id="3.40.50.360:FF:000045">
    <property type="entry name" value="NADPH-dependent diflavin oxidoreductase 1"/>
    <property type="match status" value="1"/>
</dbReference>
<dbReference type="FunFam" id="3.40.50.80:FF:000062">
    <property type="entry name" value="NADPH-dependent diflavin oxidoreductase 1"/>
    <property type="match status" value="1"/>
</dbReference>
<dbReference type="Gene3D" id="3.40.50.360">
    <property type="match status" value="1"/>
</dbReference>
<dbReference type="Gene3D" id="1.20.990.10">
    <property type="entry name" value="NADPH-cytochrome p450 Reductase, Chain A, domain 3"/>
    <property type="match status" value="1"/>
</dbReference>
<dbReference type="Gene3D" id="3.40.50.80">
    <property type="entry name" value="Nucleotide-binding domain of ferredoxin-NADP reductase (FNR) module"/>
    <property type="match status" value="1"/>
</dbReference>
<dbReference type="Gene3D" id="2.40.30.10">
    <property type="entry name" value="Translation factors"/>
    <property type="match status" value="1"/>
</dbReference>
<dbReference type="HAMAP" id="MF_03178">
    <property type="entry name" value="NDOR1"/>
    <property type="match status" value="1"/>
</dbReference>
<dbReference type="InterPro" id="IPR003097">
    <property type="entry name" value="CysJ-like_FAD-binding"/>
</dbReference>
<dbReference type="InterPro" id="IPR017927">
    <property type="entry name" value="FAD-bd_FR_type"/>
</dbReference>
<dbReference type="InterPro" id="IPR001094">
    <property type="entry name" value="Flavdoxin-like"/>
</dbReference>
<dbReference type="InterPro" id="IPR008254">
    <property type="entry name" value="Flavodoxin/NO_synth"/>
</dbReference>
<dbReference type="InterPro" id="IPR001709">
    <property type="entry name" value="Flavoprot_Pyr_Nucl_cyt_Rdtase"/>
</dbReference>
<dbReference type="InterPro" id="IPR029039">
    <property type="entry name" value="Flavoprotein-like_sf"/>
</dbReference>
<dbReference type="InterPro" id="IPR039261">
    <property type="entry name" value="FNR_nucleotide-bd"/>
</dbReference>
<dbReference type="InterPro" id="IPR023173">
    <property type="entry name" value="NADPH_Cyt_P450_Rdtase_alpha"/>
</dbReference>
<dbReference type="InterPro" id="IPR028879">
    <property type="entry name" value="NDOR1"/>
</dbReference>
<dbReference type="InterPro" id="IPR001433">
    <property type="entry name" value="OxRdtase_FAD/NAD-bd"/>
</dbReference>
<dbReference type="InterPro" id="IPR017938">
    <property type="entry name" value="Riboflavin_synthase-like_b-brl"/>
</dbReference>
<dbReference type="PANTHER" id="PTHR19384:SF10">
    <property type="entry name" value="NADPH-DEPENDENT DIFLAVIN OXIDOREDUCTASE 1"/>
    <property type="match status" value="1"/>
</dbReference>
<dbReference type="PANTHER" id="PTHR19384">
    <property type="entry name" value="NITRIC OXIDE SYNTHASE-RELATED"/>
    <property type="match status" value="1"/>
</dbReference>
<dbReference type="Pfam" id="PF00667">
    <property type="entry name" value="FAD_binding_1"/>
    <property type="match status" value="1"/>
</dbReference>
<dbReference type="Pfam" id="PF00258">
    <property type="entry name" value="Flavodoxin_1"/>
    <property type="match status" value="1"/>
</dbReference>
<dbReference type="Pfam" id="PF00175">
    <property type="entry name" value="NAD_binding_1"/>
    <property type="match status" value="1"/>
</dbReference>
<dbReference type="PRINTS" id="PR00369">
    <property type="entry name" value="FLAVODOXIN"/>
</dbReference>
<dbReference type="PRINTS" id="PR00371">
    <property type="entry name" value="FPNCR"/>
</dbReference>
<dbReference type="SUPFAM" id="SSF52343">
    <property type="entry name" value="Ferredoxin reductase-like, C-terminal NADP-linked domain"/>
    <property type="match status" value="1"/>
</dbReference>
<dbReference type="SUPFAM" id="SSF52218">
    <property type="entry name" value="Flavoproteins"/>
    <property type="match status" value="1"/>
</dbReference>
<dbReference type="SUPFAM" id="SSF63380">
    <property type="entry name" value="Riboflavin synthase domain-like"/>
    <property type="match status" value="1"/>
</dbReference>
<dbReference type="PROSITE" id="PS51384">
    <property type="entry name" value="FAD_FR"/>
    <property type="match status" value="1"/>
</dbReference>
<dbReference type="PROSITE" id="PS50902">
    <property type="entry name" value="FLAVODOXIN_LIKE"/>
    <property type="match status" value="1"/>
</dbReference>
<feature type="chain" id="PRO_0000167616" description="NADPH-dependent diflavin oxidoreductase 1">
    <location>
        <begin position="1"/>
        <end position="617"/>
    </location>
</feature>
<feature type="domain" description="Flavodoxin-like" evidence="1">
    <location>
        <begin position="3"/>
        <end position="147"/>
    </location>
</feature>
<feature type="domain" description="FAD-binding FR-type" evidence="1">
    <location>
        <begin position="226"/>
        <end position="465"/>
    </location>
</feature>
<feature type="binding site" evidence="1">
    <location>
        <begin position="9"/>
        <end position="14"/>
    </location>
    <ligand>
        <name>FMN</name>
        <dbReference type="ChEBI" id="CHEBI:58210"/>
    </ligand>
</feature>
<feature type="binding site" evidence="1">
    <location>
        <begin position="56"/>
        <end position="59"/>
    </location>
    <ligand>
        <name>FMN</name>
        <dbReference type="ChEBI" id="CHEBI:58210"/>
    </ligand>
</feature>
<feature type="binding site" evidence="1">
    <location>
        <begin position="94"/>
        <end position="103"/>
    </location>
    <ligand>
        <name>FMN</name>
        <dbReference type="ChEBI" id="CHEBI:58210"/>
    </ligand>
</feature>
<feature type="binding site" evidence="1">
    <location>
        <position position="129"/>
    </location>
    <ligand>
        <name>FMN</name>
        <dbReference type="ChEBI" id="CHEBI:58210"/>
    </ligand>
</feature>
<feature type="binding site" evidence="1">
    <location>
        <begin position="404"/>
        <end position="407"/>
    </location>
    <ligand>
        <name>FAD</name>
        <dbReference type="ChEBI" id="CHEBI:57692"/>
    </ligand>
</feature>
<feature type="binding site" evidence="1">
    <location>
        <begin position="438"/>
        <end position="441"/>
    </location>
    <ligand>
        <name>FAD</name>
        <dbReference type="ChEBI" id="CHEBI:57692"/>
    </ligand>
</feature>
<feature type="binding site" evidence="1">
    <location>
        <position position="479"/>
    </location>
    <ligand>
        <name>NADP(+)</name>
        <dbReference type="ChEBI" id="CHEBI:58349"/>
    </ligand>
</feature>
<feature type="binding site" evidence="1">
    <location>
        <begin position="534"/>
        <end position="535"/>
    </location>
    <ligand>
        <name>NADP(+)</name>
        <dbReference type="ChEBI" id="CHEBI:58349"/>
    </ligand>
</feature>
<feature type="binding site" evidence="1">
    <location>
        <begin position="540"/>
        <end position="544"/>
    </location>
    <ligand>
        <name>NADP(+)</name>
        <dbReference type="ChEBI" id="CHEBI:58349"/>
    </ligand>
</feature>
<feature type="binding site" evidence="1">
    <location>
        <position position="617"/>
    </location>
    <ligand>
        <name>FAD</name>
        <dbReference type="ChEBI" id="CHEBI:57692"/>
    </ligand>
</feature>
<proteinExistence type="inferred from homology"/>
<accession>P0CP12</accession>
<accession>Q55RG0</accession>
<accession>Q5KER0</accession>
<keyword id="KW-0963">Cytoplasm</keyword>
<keyword id="KW-0274">FAD</keyword>
<keyword id="KW-0285">Flavoprotein</keyword>
<keyword id="KW-0288">FMN</keyword>
<keyword id="KW-0496">Mitochondrion</keyword>
<keyword id="KW-0521">NADP</keyword>
<keyword id="KW-0560">Oxidoreductase</keyword>
<keyword id="KW-1185">Reference proteome</keyword>
<protein>
    <recommendedName>
        <fullName evidence="1">NADPH-dependent diflavin oxidoreductase 1</fullName>
        <ecNumber evidence="1">1.18.1.-</ecNumber>
    </recommendedName>
    <alternativeName>
        <fullName evidence="1">NADPH-dependent FMN and FAD-containing oxidoreductase</fullName>
    </alternativeName>
</protein>